<dbReference type="EC" id="4.2.1.33" evidence="1"/>
<dbReference type="EMBL" id="CP000356">
    <property type="protein sequence ID" value="ABF53838.1"/>
    <property type="molecule type" value="Genomic_DNA"/>
</dbReference>
<dbReference type="RefSeq" id="WP_011542414.1">
    <property type="nucleotide sequence ID" value="NC_008048.1"/>
</dbReference>
<dbReference type="SMR" id="Q1GR84"/>
<dbReference type="STRING" id="317655.Sala_2129"/>
<dbReference type="KEGG" id="sal:Sala_2129"/>
<dbReference type="eggNOG" id="COG0065">
    <property type="taxonomic scope" value="Bacteria"/>
</dbReference>
<dbReference type="HOGENOM" id="CLU_006714_3_4_5"/>
<dbReference type="OrthoDB" id="9802769at2"/>
<dbReference type="UniPathway" id="UPA00048">
    <property type="reaction ID" value="UER00071"/>
</dbReference>
<dbReference type="Proteomes" id="UP000006578">
    <property type="component" value="Chromosome"/>
</dbReference>
<dbReference type="GO" id="GO:0003861">
    <property type="term" value="F:3-isopropylmalate dehydratase activity"/>
    <property type="evidence" value="ECO:0007669"/>
    <property type="project" value="UniProtKB-UniRule"/>
</dbReference>
<dbReference type="GO" id="GO:0051539">
    <property type="term" value="F:4 iron, 4 sulfur cluster binding"/>
    <property type="evidence" value="ECO:0007669"/>
    <property type="project" value="UniProtKB-KW"/>
</dbReference>
<dbReference type="GO" id="GO:0046872">
    <property type="term" value="F:metal ion binding"/>
    <property type="evidence" value="ECO:0007669"/>
    <property type="project" value="UniProtKB-KW"/>
</dbReference>
<dbReference type="GO" id="GO:0009098">
    <property type="term" value="P:L-leucine biosynthetic process"/>
    <property type="evidence" value="ECO:0007669"/>
    <property type="project" value="UniProtKB-UniRule"/>
</dbReference>
<dbReference type="CDD" id="cd01583">
    <property type="entry name" value="IPMI"/>
    <property type="match status" value="1"/>
</dbReference>
<dbReference type="FunFam" id="3.30.499.10:FF:000007">
    <property type="entry name" value="3-isopropylmalate dehydratase large subunit"/>
    <property type="match status" value="1"/>
</dbReference>
<dbReference type="Gene3D" id="3.30.499.10">
    <property type="entry name" value="Aconitase, domain 3"/>
    <property type="match status" value="2"/>
</dbReference>
<dbReference type="HAMAP" id="MF_01026">
    <property type="entry name" value="LeuC_type1"/>
    <property type="match status" value="1"/>
</dbReference>
<dbReference type="InterPro" id="IPR004430">
    <property type="entry name" value="3-IsopropMal_deHydase_lsu"/>
</dbReference>
<dbReference type="InterPro" id="IPR015931">
    <property type="entry name" value="Acnase/IPM_dHydase_lsu_aba_1/3"/>
</dbReference>
<dbReference type="InterPro" id="IPR001030">
    <property type="entry name" value="Acoase/IPM_deHydtase_lsu_aba"/>
</dbReference>
<dbReference type="InterPro" id="IPR018136">
    <property type="entry name" value="Aconitase_4Fe-4S_BS"/>
</dbReference>
<dbReference type="InterPro" id="IPR036008">
    <property type="entry name" value="Aconitase_4Fe-4S_dom"/>
</dbReference>
<dbReference type="InterPro" id="IPR050067">
    <property type="entry name" value="IPM_dehydratase_rel_enz"/>
</dbReference>
<dbReference type="InterPro" id="IPR033941">
    <property type="entry name" value="IPMI_cat"/>
</dbReference>
<dbReference type="NCBIfam" id="TIGR00170">
    <property type="entry name" value="leuC"/>
    <property type="match status" value="1"/>
</dbReference>
<dbReference type="NCBIfam" id="NF004016">
    <property type="entry name" value="PRK05478.1"/>
    <property type="match status" value="1"/>
</dbReference>
<dbReference type="NCBIfam" id="NF009116">
    <property type="entry name" value="PRK12466.1"/>
    <property type="match status" value="1"/>
</dbReference>
<dbReference type="PANTHER" id="PTHR43822:SF9">
    <property type="entry name" value="3-ISOPROPYLMALATE DEHYDRATASE"/>
    <property type="match status" value="1"/>
</dbReference>
<dbReference type="PANTHER" id="PTHR43822">
    <property type="entry name" value="HOMOACONITASE, MITOCHONDRIAL-RELATED"/>
    <property type="match status" value="1"/>
</dbReference>
<dbReference type="Pfam" id="PF00330">
    <property type="entry name" value="Aconitase"/>
    <property type="match status" value="1"/>
</dbReference>
<dbReference type="PRINTS" id="PR00415">
    <property type="entry name" value="ACONITASE"/>
</dbReference>
<dbReference type="SUPFAM" id="SSF53732">
    <property type="entry name" value="Aconitase iron-sulfur domain"/>
    <property type="match status" value="1"/>
</dbReference>
<dbReference type="PROSITE" id="PS00450">
    <property type="entry name" value="ACONITASE_1"/>
    <property type="match status" value="1"/>
</dbReference>
<dbReference type="PROSITE" id="PS01244">
    <property type="entry name" value="ACONITASE_2"/>
    <property type="match status" value="1"/>
</dbReference>
<organism>
    <name type="scientific">Sphingopyxis alaskensis (strain DSM 13593 / LMG 18877 / RB2256)</name>
    <name type="common">Sphingomonas alaskensis</name>
    <dbReference type="NCBI Taxonomy" id="317655"/>
    <lineage>
        <taxon>Bacteria</taxon>
        <taxon>Pseudomonadati</taxon>
        <taxon>Pseudomonadota</taxon>
        <taxon>Alphaproteobacteria</taxon>
        <taxon>Sphingomonadales</taxon>
        <taxon>Sphingomonadaceae</taxon>
        <taxon>Sphingopyxis</taxon>
    </lineage>
</organism>
<feature type="chain" id="PRO_0000319842" description="3-isopropylmalate dehydratase large subunit">
    <location>
        <begin position="1"/>
        <end position="476"/>
    </location>
</feature>
<feature type="binding site" evidence="1">
    <location>
        <position position="355"/>
    </location>
    <ligand>
        <name>[4Fe-4S] cluster</name>
        <dbReference type="ChEBI" id="CHEBI:49883"/>
    </ligand>
</feature>
<feature type="binding site" evidence="1">
    <location>
        <position position="416"/>
    </location>
    <ligand>
        <name>[4Fe-4S] cluster</name>
        <dbReference type="ChEBI" id="CHEBI:49883"/>
    </ligand>
</feature>
<feature type="binding site" evidence="1">
    <location>
        <position position="419"/>
    </location>
    <ligand>
        <name>[4Fe-4S] cluster</name>
        <dbReference type="ChEBI" id="CHEBI:49883"/>
    </ligand>
</feature>
<name>LEUC_SPHAL</name>
<keyword id="KW-0004">4Fe-4S</keyword>
<keyword id="KW-0028">Amino-acid biosynthesis</keyword>
<keyword id="KW-0100">Branched-chain amino acid biosynthesis</keyword>
<keyword id="KW-0408">Iron</keyword>
<keyword id="KW-0411">Iron-sulfur</keyword>
<keyword id="KW-0432">Leucine biosynthesis</keyword>
<keyword id="KW-0456">Lyase</keyword>
<keyword id="KW-0479">Metal-binding</keyword>
<keyword id="KW-1185">Reference proteome</keyword>
<evidence type="ECO:0000255" key="1">
    <source>
        <dbReference type="HAMAP-Rule" id="MF_01026"/>
    </source>
</evidence>
<sequence>MTRPRTLYEKIWDAHVVERRGDGTCLIFIDRHLVHEVTSPQAFAGLRASGRTVRRPDLTLAVPDHNVPTTPRKDAAGNRLPIADPESAAQLAALEKNAPEFGIRYIDAIAPEQGIVHVVGPEQGFSLPGATIVCGDSHTACHGGIGALAFGIGTSEVEHVLATQTLLLQPAKTMEVRVEGDVGPGVSAKDIILHITGTIGAAGGTGHVIEYTGSAIRALSIEGRLTISNMAIEGGARAGLIAPDETTFAYLKGRPYAPKGADWDAAVAYWKSLTTDPGATYDKVVVIDAADIAPSVTWGTSPEDVVPITGTVPDPASFSDPSKRAAAAKSLAYMGLEPGTRMQDVPVENIFIGSCTNSRIEDLRAAAAVLKGRRKAPGVKWAIVVPGSGLVKAQAEAEGLDRIFIDAGLEWREPGCSACLAMNPDKVPAGERCASTSNRNFVGRQGPGARTHLVSPAMAAAAAVTGKLTDVRELMA</sequence>
<comment type="function">
    <text evidence="1">Catalyzes the isomerization between 2-isopropylmalate and 3-isopropylmalate, via the formation of 2-isopropylmaleate.</text>
</comment>
<comment type="catalytic activity">
    <reaction evidence="1">
        <text>(2R,3S)-3-isopropylmalate = (2S)-2-isopropylmalate</text>
        <dbReference type="Rhea" id="RHEA:32287"/>
        <dbReference type="ChEBI" id="CHEBI:1178"/>
        <dbReference type="ChEBI" id="CHEBI:35121"/>
        <dbReference type="EC" id="4.2.1.33"/>
    </reaction>
</comment>
<comment type="cofactor">
    <cofactor evidence="1">
        <name>[4Fe-4S] cluster</name>
        <dbReference type="ChEBI" id="CHEBI:49883"/>
    </cofactor>
    <text evidence="1">Binds 1 [4Fe-4S] cluster per subunit.</text>
</comment>
<comment type="pathway">
    <text evidence="1">Amino-acid biosynthesis; L-leucine biosynthesis; L-leucine from 3-methyl-2-oxobutanoate: step 2/4.</text>
</comment>
<comment type="subunit">
    <text evidence="1">Heterodimer of LeuC and LeuD.</text>
</comment>
<comment type="similarity">
    <text evidence="1">Belongs to the aconitase/IPM isomerase family. LeuC type 1 subfamily.</text>
</comment>
<proteinExistence type="inferred from homology"/>
<protein>
    <recommendedName>
        <fullName evidence="1">3-isopropylmalate dehydratase large subunit</fullName>
        <ecNumber evidence="1">4.2.1.33</ecNumber>
    </recommendedName>
    <alternativeName>
        <fullName evidence="1">Alpha-IPM isomerase</fullName>
        <shortName evidence="1">IPMI</shortName>
    </alternativeName>
    <alternativeName>
        <fullName evidence="1">Isopropylmalate isomerase</fullName>
    </alternativeName>
</protein>
<gene>
    <name evidence="1" type="primary">leuC</name>
    <name type="ordered locus">Sala_2129</name>
</gene>
<reference key="1">
    <citation type="journal article" date="2009" name="Proc. Natl. Acad. Sci. U.S.A.">
        <title>The genomic basis of trophic strategy in marine bacteria.</title>
        <authorList>
            <person name="Lauro F.M."/>
            <person name="McDougald D."/>
            <person name="Thomas T."/>
            <person name="Williams T.J."/>
            <person name="Egan S."/>
            <person name="Rice S."/>
            <person name="DeMaere M.Z."/>
            <person name="Ting L."/>
            <person name="Ertan H."/>
            <person name="Johnson J."/>
            <person name="Ferriera S."/>
            <person name="Lapidus A."/>
            <person name="Anderson I."/>
            <person name="Kyrpides N."/>
            <person name="Munk A.C."/>
            <person name="Detter C."/>
            <person name="Han C.S."/>
            <person name="Brown M.V."/>
            <person name="Robb F.T."/>
            <person name="Kjelleberg S."/>
            <person name="Cavicchioli R."/>
        </authorList>
    </citation>
    <scope>NUCLEOTIDE SEQUENCE [LARGE SCALE GENOMIC DNA]</scope>
    <source>
        <strain>DSM 13593 / LMG 18877 / RB2256</strain>
    </source>
</reference>
<accession>Q1GR84</accession>